<protein>
    <recommendedName>
        <fullName>Insulin-degrading enzyme</fullName>
        <ecNumber evidence="2">3.4.24.56</ecNumber>
    </recommendedName>
    <alternativeName>
        <fullName>Insulin protease</fullName>
        <shortName>Insulinase</shortName>
    </alternativeName>
    <alternativeName>
        <fullName>Insulysin</fullName>
    </alternativeName>
</protein>
<proteinExistence type="evidence at transcript level"/>
<comment type="function">
    <text evidence="1 3">Plays a role in the cellular breakdown of insulin, APP peptides, IAPP peptides, natriuretic peptides, glucagon, bradykinin, kallidin, and other peptides, and thereby plays a role in intercellular peptide signaling (By similarity). Substrate binding induces important conformation changes, making it possible to bind and degrade larger substrates, such as insulin (By similarity). Contributes to the regulation of peptide hormone signaling cascades and regulation of blood glucose homeostasis via its role in the degradation of insulin, glucagon and IAPP. Plays a role in the degradation and clearance of APP-derived amyloidogenic peptides that are secreted by neurons and microglia (By similarity). Degrades the natriuretic peptides ANP, BNP and CNP, inactivating their ability to raise intracellular cGMP (By similarity). Also degrades an aberrant frameshifted 40-residue form of NPPA (fsNPPA) which is associated with familial atrial fibrillation in heterozygous patients (By similarity). Involved in antigen processing. Produces both the N terminus and the C terminus of MAGEA3-derived antigenic peptide (EVDPIGHLY) that is presented to cytotoxic T lymphocytes by MHC class I (By similarity).</text>
</comment>
<comment type="catalytic activity">
    <reaction evidence="2">
        <text>Degradation of insulin, glucagon and other polypeptides. No action on proteins.</text>
        <dbReference type="EC" id="3.4.24.56"/>
    </reaction>
</comment>
<comment type="cofactor">
    <cofactor evidence="2">
        <name>Zn(2+)</name>
        <dbReference type="ChEBI" id="CHEBI:29105"/>
    </cofactor>
    <text evidence="2">Binds 1 zinc ion per subunit.</text>
</comment>
<comment type="activity regulation">
    <text evidence="2">Activated by ATP, other nucleotide triphosphates and small peptides. Inhibited by bacitracin.</text>
</comment>
<comment type="subunit">
    <text evidence="2">Homodimer. Can also form homotetramers.</text>
</comment>
<comment type="subcellular location">
    <subcellularLocation>
        <location evidence="2">Cytoplasm</location>
        <location evidence="2">Cytosol</location>
    </subcellularLocation>
    <subcellularLocation>
        <location evidence="2">Cell membrane</location>
    </subcellularLocation>
    <subcellularLocation>
        <location evidence="2">Secreted</location>
    </subcellularLocation>
</comment>
<comment type="domain">
    <text evidence="3">The SlyX motif may be involved in the non-conventional secretion of the protein.</text>
</comment>
<comment type="miscellaneous">
    <text evidence="1">ATP-binding induces a conformation change.</text>
</comment>
<comment type="similarity">
    <text evidence="5">Belongs to the peptidase M16 family.</text>
</comment>
<organism>
    <name type="scientific">Bos taurus</name>
    <name type="common">Bovine</name>
    <dbReference type="NCBI Taxonomy" id="9913"/>
    <lineage>
        <taxon>Eukaryota</taxon>
        <taxon>Metazoa</taxon>
        <taxon>Chordata</taxon>
        <taxon>Craniata</taxon>
        <taxon>Vertebrata</taxon>
        <taxon>Euteleostomi</taxon>
        <taxon>Mammalia</taxon>
        <taxon>Eutheria</taxon>
        <taxon>Laurasiatheria</taxon>
        <taxon>Artiodactyla</taxon>
        <taxon>Ruminantia</taxon>
        <taxon>Pecora</taxon>
        <taxon>Bovidae</taxon>
        <taxon>Bovinae</taxon>
        <taxon>Bos</taxon>
    </lineage>
</organism>
<reference key="1">
    <citation type="submission" date="2006-02" db="EMBL/GenBank/DDBJ databases">
        <authorList>
            <consortium name="NIH - Mammalian Gene Collection (MGC) project"/>
        </authorList>
    </citation>
    <scope>NUCLEOTIDE SEQUENCE [LARGE SCALE MRNA]</scope>
    <source>
        <strain>Hereford</strain>
        <tissue>Hypothalamus</tissue>
    </source>
</reference>
<keyword id="KW-0021">Allosteric enzyme</keyword>
<keyword id="KW-0067">ATP-binding</keyword>
<keyword id="KW-1003">Cell membrane</keyword>
<keyword id="KW-0963">Cytoplasm</keyword>
<keyword id="KW-0378">Hydrolase</keyword>
<keyword id="KW-0472">Membrane</keyword>
<keyword id="KW-0479">Metal-binding</keyword>
<keyword id="KW-0482">Metalloprotease</keyword>
<keyword id="KW-0547">Nucleotide-binding</keyword>
<keyword id="KW-0645">Protease</keyword>
<keyword id="KW-1185">Reference proteome</keyword>
<keyword id="KW-0964">Secreted</keyword>
<keyword id="KW-0862">Zinc</keyword>
<name>IDE_BOVIN</name>
<accession>Q24K02</accession>
<sequence>MRYRLAWLLHSALPSTFRSVLGARLPPSERLCGFQKKTYSKMNNPAIKRIGHHIIKSHEDKREYRGLELANGIKVLLVSDPTTDKSSAALDVHIGSLSDPPNIAGLSHFCEHMLFLGTKKYPKENEYSQFLSEHAGSSNAFTSGEHTNYYFDVSHEHLEGALDRFAQFFLCPLFDESCKDREVNAVDSEHEKNVMNDAWRLFQLEKATGNPKHPFSKFGTGNKYTLETRPNQEGIDVRQELLKFHSTYYSSNLMAICVLGRESLDDLTNLVVKLFSEVENKNVPLPEFPEHPFQEEHLKQLYKIVPIKDIRNLYVTFPIPDLQKYYKSNPGHYLGHLIGHEGPGSLLSELKSKGWVNTLVGGQKEGARGFMFFIINVDLTEEGLLHVEDIILHMFQYIQKLRAEGPQEWVFQECKDLNAVAFRFKDKERPRGYTSKIAGILHYYPLEEVLTAEYLLEEFRPDLIEMVLDKLRPENVRVAIVSKSFEGKTDRTEEWYGTQYKQEAIPDEVIKKWQNADLNGKFKLPMKNEFIPTNFEILSLEKEATPYPSLIKDTAMSKLWFKQDDKFFLPKACLNFEFFSPFAYVDPLHCNMAYLYLELLKDSLNEYAYAAELAGLSYDLQNTIYGMYLSVKGYNDKQPILLKKIIEKMATFEIDEKRFEIIKEAYMRSLNNFRAEQPHQHAMYYLRLLMTEVAWTKDELKEALDDVTLPRLKAFIPQLLSRLHIEALLHGNITKQAALGIMQMVEDTLIEHAHTKPLLPSQLVRYREVQLPDRGWFVYQQRNEVHNNCGIEIYYQTDMQSTSENMFLELFCQIISEPCFNTLRTKEQLGYIVFSGPRRANGIQGLRFIIQSEKPPHYLESRVEAFLITMEKSIEDMTEEAFQKHIQALAIRRLDKPKKLSAECAKYWGEIISQQYNFDRDNIEVAYLKTLTKEDIIKFYKEMLAVDAPRRHKVSVHVLAREMDSCPVVGEFPCQNDINLSQAPALPQPEVIQNMTEFKRGLPLFPLVKPHINFMAAKL</sequence>
<evidence type="ECO:0000250" key="1">
    <source>
        <dbReference type="UniProtKB" id="P14735"/>
    </source>
</evidence>
<evidence type="ECO:0000250" key="2">
    <source>
        <dbReference type="UniProtKB" id="P35559"/>
    </source>
</evidence>
<evidence type="ECO:0000250" key="3">
    <source>
        <dbReference type="UniProtKB" id="Q9JHR7"/>
    </source>
</evidence>
<evidence type="ECO:0000255" key="4">
    <source>
        <dbReference type="PROSITE-ProRule" id="PRU10096"/>
    </source>
</evidence>
<evidence type="ECO:0000305" key="5"/>
<dbReference type="EC" id="3.4.24.56" evidence="2"/>
<dbReference type="EMBL" id="BC114105">
    <property type="protein sequence ID" value="AAI14106.1"/>
    <property type="molecule type" value="mRNA"/>
</dbReference>
<dbReference type="RefSeq" id="NP_001069317.1">
    <property type="nucleotide sequence ID" value="NM_001075849.1"/>
</dbReference>
<dbReference type="SMR" id="Q24K02"/>
<dbReference type="FunCoup" id="Q24K02">
    <property type="interactions" value="3355"/>
</dbReference>
<dbReference type="STRING" id="9913.ENSBTAP00000026332"/>
<dbReference type="MEROPS" id="M16.002"/>
<dbReference type="MEROPS" id="M16.984"/>
<dbReference type="PaxDb" id="9913-ENSBTAP00000026332"/>
<dbReference type="GeneID" id="523752"/>
<dbReference type="KEGG" id="bta:523752"/>
<dbReference type="CTD" id="3416"/>
<dbReference type="VEuPathDB" id="HostDB:ENSBTAG00000019759"/>
<dbReference type="eggNOG" id="KOG0959">
    <property type="taxonomic scope" value="Eukaryota"/>
</dbReference>
<dbReference type="HOGENOM" id="CLU_004639_1_1_1"/>
<dbReference type="InParanoid" id="Q24K02"/>
<dbReference type="OMA" id="WIFDEMK"/>
<dbReference type="OrthoDB" id="952271at2759"/>
<dbReference type="TreeFam" id="TF106275"/>
<dbReference type="Reactome" id="R-BTA-5689880">
    <property type="pathway name" value="Ub-specific processing proteases"/>
</dbReference>
<dbReference type="Reactome" id="R-BTA-77387">
    <property type="pathway name" value="Insulin receptor recycling"/>
</dbReference>
<dbReference type="Reactome" id="R-BTA-9033241">
    <property type="pathway name" value="Peroxisomal protein import"/>
</dbReference>
<dbReference type="Proteomes" id="UP000009136">
    <property type="component" value="Chromosome 26"/>
</dbReference>
<dbReference type="Bgee" id="ENSBTAG00000019759">
    <property type="expression patterns" value="Expressed in zone of skin and 106 other cell types or tissues"/>
</dbReference>
<dbReference type="GO" id="GO:0005829">
    <property type="term" value="C:cytosol"/>
    <property type="evidence" value="ECO:0000250"/>
    <property type="project" value="UniProtKB"/>
</dbReference>
<dbReference type="GO" id="GO:0005576">
    <property type="term" value="C:extracellular region"/>
    <property type="evidence" value="ECO:0007669"/>
    <property type="project" value="UniProtKB-SubCell"/>
</dbReference>
<dbReference type="GO" id="GO:0005739">
    <property type="term" value="C:mitochondrion"/>
    <property type="evidence" value="ECO:0000318"/>
    <property type="project" value="GO_Central"/>
</dbReference>
<dbReference type="GO" id="GO:0005782">
    <property type="term" value="C:peroxisomal matrix"/>
    <property type="evidence" value="ECO:0000318"/>
    <property type="project" value="GO_Central"/>
</dbReference>
<dbReference type="GO" id="GO:0005886">
    <property type="term" value="C:plasma membrane"/>
    <property type="evidence" value="ECO:0007669"/>
    <property type="project" value="UniProtKB-SubCell"/>
</dbReference>
<dbReference type="GO" id="GO:0005524">
    <property type="term" value="F:ATP binding"/>
    <property type="evidence" value="ECO:0000250"/>
    <property type="project" value="UniProtKB"/>
</dbReference>
<dbReference type="GO" id="GO:0004175">
    <property type="term" value="F:endopeptidase activity"/>
    <property type="evidence" value="ECO:0000250"/>
    <property type="project" value="UniProtKB"/>
</dbReference>
<dbReference type="GO" id="GO:0004222">
    <property type="term" value="F:metalloendopeptidase activity"/>
    <property type="evidence" value="ECO:0000250"/>
    <property type="project" value="UniProtKB"/>
</dbReference>
<dbReference type="GO" id="GO:0042803">
    <property type="term" value="F:protein homodimerization activity"/>
    <property type="evidence" value="ECO:0000250"/>
    <property type="project" value="UniProtKB"/>
</dbReference>
<dbReference type="GO" id="GO:0008270">
    <property type="term" value="F:zinc ion binding"/>
    <property type="evidence" value="ECO:0000250"/>
    <property type="project" value="UniProtKB"/>
</dbReference>
<dbReference type="GO" id="GO:0050435">
    <property type="term" value="P:amyloid-beta metabolic process"/>
    <property type="evidence" value="ECO:0000250"/>
    <property type="project" value="UniProtKB"/>
</dbReference>
<dbReference type="GO" id="GO:0019885">
    <property type="term" value="P:antigen processing and presentation of endogenous peptide antigen via MHC class I"/>
    <property type="evidence" value="ECO:0000250"/>
    <property type="project" value="UniProtKB"/>
</dbReference>
<dbReference type="GO" id="GO:0010815">
    <property type="term" value="P:bradykinin catabolic process"/>
    <property type="evidence" value="ECO:0000250"/>
    <property type="project" value="UniProtKB"/>
</dbReference>
<dbReference type="GO" id="GO:0042447">
    <property type="term" value="P:hormone catabolic process"/>
    <property type="evidence" value="ECO:0000250"/>
    <property type="project" value="UniProtKB"/>
</dbReference>
<dbReference type="GO" id="GO:1901143">
    <property type="term" value="P:insulin catabolic process"/>
    <property type="evidence" value="ECO:0000250"/>
    <property type="project" value="UniProtKB"/>
</dbReference>
<dbReference type="GO" id="GO:0043171">
    <property type="term" value="P:peptide catabolic process"/>
    <property type="evidence" value="ECO:0000250"/>
    <property type="project" value="UniProtKB"/>
</dbReference>
<dbReference type="GO" id="GO:0030163">
    <property type="term" value="P:protein catabolic process"/>
    <property type="evidence" value="ECO:0000250"/>
    <property type="project" value="UniProtKB"/>
</dbReference>
<dbReference type="GO" id="GO:0051603">
    <property type="term" value="P:proteolysis involved in protein catabolic process"/>
    <property type="evidence" value="ECO:0000318"/>
    <property type="project" value="GO_Central"/>
</dbReference>
<dbReference type="FunFam" id="3.30.830.10:FF:000003">
    <property type="entry name" value="Insulin-degrading enzyme"/>
    <property type="match status" value="1"/>
</dbReference>
<dbReference type="FunFam" id="3.30.830.10:FF:000007">
    <property type="entry name" value="Insulin-degrading enzyme"/>
    <property type="match status" value="1"/>
</dbReference>
<dbReference type="FunFam" id="3.30.830.10:FF:000004">
    <property type="entry name" value="Putative insulin-degrading enzyme"/>
    <property type="match status" value="1"/>
</dbReference>
<dbReference type="FunFam" id="3.30.830.10:FF:000006">
    <property type="entry name" value="Putative insulin-degrading enzyme"/>
    <property type="match status" value="1"/>
</dbReference>
<dbReference type="Gene3D" id="3.30.830.10">
    <property type="entry name" value="Metalloenzyme, LuxS/M16 peptidase-like"/>
    <property type="match status" value="4"/>
</dbReference>
<dbReference type="InterPro" id="IPR011249">
    <property type="entry name" value="Metalloenz_LuxS/M16"/>
</dbReference>
<dbReference type="InterPro" id="IPR011765">
    <property type="entry name" value="Pept_M16_N"/>
</dbReference>
<dbReference type="InterPro" id="IPR001431">
    <property type="entry name" value="Pept_M16_Zn_BS"/>
</dbReference>
<dbReference type="InterPro" id="IPR050626">
    <property type="entry name" value="Peptidase_M16"/>
</dbReference>
<dbReference type="InterPro" id="IPR007863">
    <property type="entry name" value="Peptidase_M16_C"/>
</dbReference>
<dbReference type="InterPro" id="IPR032632">
    <property type="entry name" value="Peptidase_M16_M"/>
</dbReference>
<dbReference type="InterPro" id="IPR054734">
    <property type="entry name" value="PqqF-like_C_4"/>
</dbReference>
<dbReference type="PANTHER" id="PTHR43690:SF18">
    <property type="entry name" value="INSULIN-DEGRADING ENZYME-RELATED"/>
    <property type="match status" value="1"/>
</dbReference>
<dbReference type="PANTHER" id="PTHR43690">
    <property type="entry name" value="NARDILYSIN"/>
    <property type="match status" value="1"/>
</dbReference>
<dbReference type="Pfam" id="PF00675">
    <property type="entry name" value="Peptidase_M16"/>
    <property type="match status" value="1"/>
</dbReference>
<dbReference type="Pfam" id="PF05193">
    <property type="entry name" value="Peptidase_M16_C"/>
    <property type="match status" value="1"/>
</dbReference>
<dbReference type="Pfam" id="PF16187">
    <property type="entry name" value="Peptidase_M16_M"/>
    <property type="match status" value="1"/>
</dbReference>
<dbReference type="Pfam" id="PF22456">
    <property type="entry name" value="PqqF-like_C_4"/>
    <property type="match status" value="1"/>
</dbReference>
<dbReference type="SUPFAM" id="SSF63411">
    <property type="entry name" value="LuxS/MPP-like metallohydrolase"/>
    <property type="match status" value="4"/>
</dbReference>
<dbReference type="PROSITE" id="PS00143">
    <property type="entry name" value="INSULINASE"/>
    <property type="match status" value="1"/>
</dbReference>
<gene>
    <name type="primary">IDE</name>
</gene>
<feature type="chain" id="PRO_0000283041" description="Insulin-degrading enzyme">
    <location>
        <begin position="1"/>
        <end position="1019"/>
    </location>
</feature>
<feature type="short sequence motif" description="SlyX motif" evidence="3">
    <location>
        <begin position="853"/>
        <end position="858"/>
    </location>
</feature>
<feature type="active site" description="Proton acceptor" evidence="4">
    <location>
        <position position="111"/>
    </location>
</feature>
<feature type="binding site" evidence="4">
    <location>
        <position position="108"/>
    </location>
    <ligand>
        <name>Zn(2+)</name>
        <dbReference type="ChEBI" id="CHEBI:29105"/>
    </ligand>
</feature>
<feature type="binding site" evidence="4">
    <location>
        <position position="112"/>
    </location>
    <ligand>
        <name>Zn(2+)</name>
        <dbReference type="ChEBI" id="CHEBI:29105"/>
    </ligand>
</feature>
<feature type="binding site" evidence="4">
    <location>
        <position position="189"/>
    </location>
    <ligand>
        <name>Zn(2+)</name>
        <dbReference type="ChEBI" id="CHEBI:29105"/>
    </ligand>
</feature>
<feature type="binding site" evidence="1">
    <location>
        <begin position="359"/>
        <end position="363"/>
    </location>
    <ligand>
        <name>substrate</name>
    </ligand>
</feature>
<feature type="binding site" evidence="2">
    <location>
        <position position="429"/>
    </location>
    <ligand>
        <name>ATP</name>
        <dbReference type="ChEBI" id="CHEBI:30616"/>
    </ligand>
</feature>
<feature type="binding site" evidence="2">
    <location>
        <begin position="895"/>
        <end position="901"/>
    </location>
    <ligand>
        <name>ATP</name>
        <dbReference type="ChEBI" id="CHEBI:30616"/>
    </ligand>
</feature>
<feature type="modified residue" description="N6-succinyllysine" evidence="3">
    <location>
        <position position="192"/>
    </location>
</feature>
<feature type="modified residue" description="N6-succinyllysine" evidence="3">
    <location>
        <position position="697"/>
    </location>
</feature>